<reference key="1">
    <citation type="submission" date="2006-10" db="EMBL/GenBank/DDBJ databases">
        <title>Complete sequence of Syntrophobacter fumaroxidans MPOB.</title>
        <authorList>
            <consortium name="US DOE Joint Genome Institute"/>
            <person name="Copeland A."/>
            <person name="Lucas S."/>
            <person name="Lapidus A."/>
            <person name="Barry K."/>
            <person name="Detter J.C."/>
            <person name="Glavina del Rio T."/>
            <person name="Hammon N."/>
            <person name="Israni S."/>
            <person name="Pitluck S."/>
            <person name="Goltsman E.G."/>
            <person name="Martinez M."/>
            <person name="Schmutz J."/>
            <person name="Larimer F."/>
            <person name="Land M."/>
            <person name="Hauser L."/>
            <person name="Kyrpides N."/>
            <person name="Kim E."/>
            <person name="Boone D.R."/>
            <person name="Brockman F."/>
            <person name="Culley D."/>
            <person name="Ferry J."/>
            <person name="Gunsalus R."/>
            <person name="McInerney M.J."/>
            <person name="Morrison M."/>
            <person name="Plugge C."/>
            <person name="Rohlin L."/>
            <person name="Scholten J."/>
            <person name="Sieber J."/>
            <person name="Stams A.J.M."/>
            <person name="Worm P."/>
            <person name="Henstra A.M."/>
            <person name="Richardson P."/>
        </authorList>
    </citation>
    <scope>NUCLEOTIDE SEQUENCE [LARGE SCALE GENOMIC DNA]</scope>
    <source>
        <strain>DSM 10017 / MPOB</strain>
    </source>
</reference>
<proteinExistence type="inferred from homology"/>
<evidence type="ECO:0000255" key="1">
    <source>
        <dbReference type="HAMAP-Rule" id="MF_00012"/>
    </source>
</evidence>
<organism>
    <name type="scientific">Syntrophobacter fumaroxidans (strain DSM 10017 / MPOB)</name>
    <dbReference type="NCBI Taxonomy" id="335543"/>
    <lineage>
        <taxon>Bacteria</taxon>
        <taxon>Pseudomonadati</taxon>
        <taxon>Thermodesulfobacteriota</taxon>
        <taxon>Syntrophobacteria</taxon>
        <taxon>Syntrophobacterales</taxon>
        <taxon>Syntrophobacteraceae</taxon>
        <taxon>Syntrophobacter</taxon>
    </lineage>
</organism>
<dbReference type="EC" id="4.2.1.9" evidence="1"/>
<dbReference type="EMBL" id="CP000478">
    <property type="protein sequence ID" value="ABK16056.1"/>
    <property type="molecule type" value="Genomic_DNA"/>
</dbReference>
<dbReference type="RefSeq" id="WP_011697229.1">
    <property type="nucleotide sequence ID" value="NC_008554.1"/>
</dbReference>
<dbReference type="SMR" id="A0LF54"/>
<dbReference type="FunCoup" id="A0LF54">
    <property type="interactions" value="483"/>
</dbReference>
<dbReference type="STRING" id="335543.Sfum_0356"/>
<dbReference type="KEGG" id="sfu:Sfum_0356"/>
<dbReference type="eggNOG" id="COG0129">
    <property type="taxonomic scope" value="Bacteria"/>
</dbReference>
<dbReference type="HOGENOM" id="CLU_014271_4_2_7"/>
<dbReference type="InParanoid" id="A0LF54"/>
<dbReference type="OrthoDB" id="9807077at2"/>
<dbReference type="UniPathway" id="UPA00047">
    <property type="reaction ID" value="UER00057"/>
</dbReference>
<dbReference type="UniPathway" id="UPA00049">
    <property type="reaction ID" value="UER00061"/>
</dbReference>
<dbReference type="Proteomes" id="UP000001784">
    <property type="component" value="Chromosome"/>
</dbReference>
<dbReference type="GO" id="GO:0005829">
    <property type="term" value="C:cytosol"/>
    <property type="evidence" value="ECO:0007669"/>
    <property type="project" value="TreeGrafter"/>
</dbReference>
<dbReference type="GO" id="GO:0051537">
    <property type="term" value="F:2 iron, 2 sulfur cluster binding"/>
    <property type="evidence" value="ECO:0007669"/>
    <property type="project" value="UniProtKB-UniRule"/>
</dbReference>
<dbReference type="GO" id="GO:0004160">
    <property type="term" value="F:dihydroxy-acid dehydratase activity"/>
    <property type="evidence" value="ECO:0007669"/>
    <property type="project" value="UniProtKB-UniRule"/>
</dbReference>
<dbReference type="GO" id="GO:0000287">
    <property type="term" value="F:magnesium ion binding"/>
    <property type="evidence" value="ECO:0007669"/>
    <property type="project" value="UniProtKB-UniRule"/>
</dbReference>
<dbReference type="GO" id="GO:0009097">
    <property type="term" value="P:isoleucine biosynthetic process"/>
    <property type="evidence" value="ECO:0007669"/>
    <property type="project" value="UniProtKB-UniRule"/>
</dbReference>
<dbReference type="GO" id="GO:0009099">
    <property type="term" value="P:L-valine biosynthetic process"/>
    <property type="evidence" value="ECO:0007669"/>
    <property type="project" value="UniProtKB-UniRule"/>
</dbReference>
<dbReference type="FunFam" id="3.50.30.80:FF:000001">
    <property type="entry name" value="Dihydroxy-acid dehydratase"/>
    <property type="match status" value="1"/>
</dbReference>
<dbReference type="Gene3D" id="3.50.30.80">
    <property type="entry name" value="IlvD/EDD C-terminal domain-like"/>
    <property type="match status" value="1"/>
</dbReference>
<dbReference type="HAMAP" id="MF_00012">
    <property type="entry name" value="IlvD"/>
    <property type="match status" value="1"/>
</dbReference>
<dbReference type="InterPro" id="IPR042096">
    <property type="entry name" value="Dihydro-acid_dehy_C"/>
</dbReference>
<dbReference type="InterPro" id="IPR004404">
    <property type="entry name" value="DihydroxyA_deHydtase"/>
</dbReference>
<dbReference type="InterPro" id="IPR020558">
    <property type="entry name" value="DiOHA_6PGluconate_deHydtase_CS"/>
</dbReference>
<dbReference type="InterPro" id="IPR056740">
    <property type="entry name" value="ILV_EDD_C"/>
</dbReference>
<dbReference type="InterPro" id="IPR000581">
    <property type="entry name" value="ILV_EDD_N"/>
</dbReference>
<dbReference type="InterPro" id="IPR037237">
    <property type="entry name" value="IlvD/EDD_N"/>
</dbReference>
<dbReference type="NCBIfam" id="TIGR00110">
    <property type="entry name" value="ilvD"/>
    <property type="match status" value="1"/>
</dbReference>
<dbReference type="NCBIfam" id="NF002068">
    <property type="entry name" value="PRK00911.1"/>
    <property type="match status" value="1"/>
</dbReference>
<dbReference type="PANTHER" id="PTHR43661">
    <property type="entry name" value="D-XYLONATE DEHYDRATASE"/>
    <property type="match status" value="1"/>
</dbReference>
<dbReference type="PANTHER" id="PTHR43661:SF3">
    <property type="entry name" value="D-XYLONATE DEHYDRATASE YAGF-RELATED"/>
    <property type="match status" value="1"/>
</dbReference>
<dbReference type="Pfam" id="PF24877">
    <property type="entry name" value="ILV_EDD_C"/>
    <property type="match status" value="1"/>
</dbReference>
<dbReference type="Pfam" id="PF00920">
    <property type="entry name" value="ILVD_EDD_N"/>
    <property type="match status" value="1"/>
</dbReference>
<dbReference type="SUPFAM" id="SSF143975">
    <property type="entry name" value="IlvD/EDD N-terminal domain-like"/>
    <property type="match status" value="1"/>
</dbReference>
<dbReference type="SUPFAM" id="SSF52016">
    <property type="entry name" value="LeuD/IlvD-like"/>
    <property type="match status" value="1"/>
</dbReference>
<dbReference type="PROSITE" id="PS00886">
    <property type="entry name" value="ILVD_EDD_1"/>
    <property type="match status" value="1"/>
</dbReference>
<dbReference type="PROSITE" id="PS00887">
    <property type="entry name" value="ILVD_EDD_2"/>
    <property type="match status" value="1"/>
</dbReference>
<name>ILVD_SYNFM</name>
<gene>
    <name evidence="1" type="primary">ilvD</name>
    <name type="ordered locus">Sfum_0356</name>
</gene>
<sequence>MRSDLMKKGVEKAPHRSLFKAMGYTQTELDRPLIGVANSANEIIPGHIHLDKVAEAVKAGIRLAGGTPIEFSTIGVCDGIAMNHAGMRYSLASRELIADSVEIMSMAHPFDGLVAVPNCDKIIPGMLMAMLRLDIPAILISGGPMLAGRAGHKQVDLVSVFEAVGSFKAGTITMEELEQLEDYACPGCGSCAGMFTANSMNCLSEALGLALPGNGTIPAVTGARMRLAKLAGMRIVELIKADIRPRQIATQKAFENAITVDMALGCSTNTVLHVPAIAREAGIDLDLGLFNTLSSRTPHLCSLRPGGPHFLENLDQAGGVQAVMKELLARDLIHRDAMTVTGLTVGKNLESSKNTDPTVIRPISDPYHNEGGIAILYGNLAPEGAVVKQSAVAPEMLQRTCRARVFESETDAAGGILDGKIKPGDVVVIRYEGPKGGPGMQEMLTPTAAIIGMGLGKDVALITDGRFSGGTQGAAIGHVSPEAAVGGPIALIEEGDEILVDILNKRLELMVDDATLKARRDKWKAPAPRMTQGYLARYAHMVTSGSTGAVLRTEQDK</sequence>
<comment type="function">
    <text evidence="1">Functions in the biosynthesis of branched-chain amino acids. Catalyzes the dehydration of (2R,3R)-2,3-dihydroxy-3-methylpentanoate (2,3-dihydroxy-3-methylvalerate) into 2-oxo-3-methylpentanoate (2-oxo-3-methylvalerate) and of (2R)-2,3-dihydroxy-3-methylbutanoate (2,3-dihydroxyisovalerate) into 2-oxo-3-methylbutanoate (2-oxoisovalerate), the penultimate precursor to L-isoleucine and L-valine, respectively.</text>
</comment>
<comment type="catalytic activity">
    <reaction evidence="1">
        <text>(2R)-2,3-dihydroxy-3-methylbutanoate = 3-methyl-2-oxobutanoate + H2O</text>
        <dbReference type="Rhea" id="RHEA:24809"/>
        <dbReference type="ChEBI" id="CHEBI:11851"/>
        <dbReference type="ChEBI" id="CHEBI:15377"/>
        <dbReference type="ChEBI" id="CHEBI:49072"/>
        <dbReference type="EC" id="4.2.1.9"/>
    </reaction>
    <physiologicalReaction direction="left-to-right" evidence="1">
        <dbReference type="Rhea" id="RHEA:24810"/>
    </physiologicalReaction>
</comment>
<comment type="catalytic activity">
    <reaction evidence="1">
        <text>(2R,3R)-2,3-dihydroxy-3-methylpentanoate = (S)-3-methyl-2-oxopentanoate + H2O</text>
        <dbReference type="Rhea" id="RHEA:27694"/>
        <dbReference type="ChEBI" id="CHEBI:15377"/>
        <dbReference type="ChEBI" id="CHEBI:35146"/>
        <dbReference type="ChEBI" id="CHEBI:49258"/>
        <dbReference type="EC" id="4.2.1.9"/>
    </reaction>
    <physiologicalReaction direction="left-to-right" evidence="1">
        <dbReference type="Rhea" id="RHEA:27695"/>
    </physiologicalReaction>
</comment>
<comment type="cofactor">
    <cofactor evidence="1">
        <name>[2Fe-2S] cluster</name>
        <dbReference type="ChEBI" id="CHEBI:190135"/>
    </cofactor>
    <text evidence="1">Binds 1 [2Fe-2S] cluster per subunit. This cluster acts as a Lewis acid cofactor.</text>
</comment>
<comment type="cofactor">
    <cofactor evidence="1">
        <name>Mg(2+)</name>
        <dbReference type="ChEBI" id="CHEBI:18420"/>
    </cofactor>
</comment>
<comment type="pathway">
    <text evidence="1">Amino-acid biosynthesis; L-isoleucine biosynthesis; L-isoleucine from 2-oxobutanoate: step 3/4.</text>
</comment>
<comment type="pathway">
    <text evidence="1">Amino-acid biosynthesis; L-valine biosynthesis; L-valine from pyruvate: step 3/4.</text>
</comment>
<comment type="subunit">
    <text evidence="1">Homodimer.</text>
</comment>
<comment type="similarity">
    <text evidence="1">Belongs to the IlvD/Edd family.</text>
</comment>
<feature type="chain" id="PRO_1000001074" description="Dihydroxy-acid dehydratase">
    <location>
        <begin position="1"/>
        <end position="557"/>
    </location>
</feature>
<feature type="active site" description="Proton acceptor" evidence="1">
    <location>
        <position position="468"/>
    </location>
</feature>
<feature type="binding site" evidence="1">
    <location>
        <position position="78"/>
    </location>
    <ligand>
        <name>Mg(2+)</name>
        <dbReference type="ChEBI" id="CHEBI:18420"/>
    </ligand>
</feature>
<feature type="binding site" evidence="1">
    <location>
        <position position="119"/>
    </location>
    <ligand>
        <name>[2Fe-2S] cluster</name>
        <dbReference type="ChEBI" id="CHEBI:190135"/>
    </ligand>
</feature>
<feature type="binding site" evidence="1">
    <location>
        <position position="120"/>
    </location>
    <ligand>
        <name>Mg(2+)</name>
        <dbReference type="ChEBI" id="CHEBI:18420"/>
    </ligand>
</feature>
<feature type="binding site" description="via carbamate group" evidence="1">
    <location>
        <position position="121"/>
    </location>
    <ligand>
        <name>Mg(2+)</name>
        <dbReference type="ChEBI" id="CHEBI:18420"/>
    </ligand>
</feature>
<feature type="binding site" evidence="1">
    <location>
        <position position="191"/>
    </location>
    <ligand>
        <name>[2Fe-2S] cluster</name>
        <dbReference type="ChEBI" id="CHEBI:190135"/>
    </ligand>
</feature>
<feature type="binding site" evidence="1">
    <location>
        <position position="442"/>
    </location>
    <ligand>
        <name>Mg(2+)</name>
        <dbReference type="ChEBI" id="CHEBI:18420"/>
    </ligand>
</feature>
<feature type="modified residue" description="N6-carboxylysine" evidence="1">
    <location>
        <position position="121"/>
    </location>
</feature>
<keyword id="KW-0001">2Fe-2S</keyword>
<keyword id="KW-0028">Amino-acid biosynthesis</keyword>
<keyword id="KW-0100">Branched-chain amino acid biosynthesis</keyword>
<keyword id="KW-0408">Iron</keyword>
<keyword id="KW-0411">Iron-sulfur</keyword>
<keyword id="KW-0456">Lyase</keyword>
<keyword id="KW-0460">Magnesium</keyword>
<keyword id="KW-0479">Metal-binding</keyword>
<keyword id="KW-1185">Reference proteome</keyword>
<protein>
    <recommendedName>
        <fullName evidence="1">Dihydroxy-acid dehydratase</fullName>
        <shortName evidence="1">DAD</shortName>
        <ecNumber evidence="1">4.2.1.9</ecNumber>
    </recommendedName>
</protein>
<accession>A0LF54</accession>